<evidence type="ECO:0000255" key="1">
    <source>
        <dbReference type="HAMAP-Rule" id="MF_01440"/>
    </source>
</evidence>
<gene>
    <name evidence="1" type="primary">cheD</name>
    <name type="ordered locus">Bxeno_A4270</name>
    <name type="ORF">Bxe_A0123</name>
</gene>
<keyword id="KW-0145">Chemotaxis</keyword>
<keyword id="KW-0378">Hydrolase</keyword>
<keyword id="KW-1185">Reference proteome</keyword>
<organism>
    <name type="scientific">Paraburkholderia xenovorans (strain LB400)</name>
    <dbReference type="NCBI Taxonomy" id="266265"/>
    <lineage>
        <taxon>Bacteria</taxon>
        <taxon>Pseudomonadati</taxon>
        <taxon>Pseudomonadota</taxon>
        <taxon>Betaproteobacteria</taxon>
        <taxon>Burkholderiales</taxon>
        <taxon>Burkholderiaceae</taxon>
        <taxon>Paraburkholderia</taxon>
    </lineage>
</organism>
<dbReference type="EC" id="3.5.1.44" evidence="1"/>
<dbReference type="EMBL" id="CP000270">
    <property type="protein sequence ID" value="ABE32808.1"/>
    <property type="molecule type" value="Genomic_DNA"/>
</dbReference>
<dbReference type="RefSeq" id="WP_011490223.1">
    <property type="nucleotide sequence ID" value="NC_007951.1"/>
</dbReference>
<dbReference type="SMR" id="Q13SY1"/>
<dbReference type="STRING" id="266265.Bxe_A0123"/>
<dbReference type="KEGG" id="bxb:DR64_2298"/>
<dbReference type="KEGG" id="bxe:Bxe_A0123"/>
<dbReference type="PATRIC" id="fig|266265.5.peg.4489"/>
<dbReference type="eggNOG" id="COG1871">
    <property type="taxonomic scope" value="Bacteria"/>
</dbReference>
<dbReference type="OrthoDB" id="9807202at2"/>
<dbReference type="Proteomes" id="UP000001817">
    <property type="component" value="Chromosome 1"/>
</dbReference>
<dbReference type="GO" id="GO:0050568">
    <property type="term" value="F:protein-glutamine glutaminase activity"/>
    <property type="evidence" value="ECO:0007669"/>
    <property type="project" value="UniProtKB-UniRule"/>
</dbReference>
<dbReference type="GO" id="GO:0006935">
    <property type="term" value="P:chemotaxis"/>
    <property type="evidence" value="ECO:0007669"/>
    <property type="project" value="UniProtKB-UniRule"/>
</dbReference>
<dbReference type="CDD" id="cd16352">
    <property type="entry name" value="CheD"/>
    <property type="match status" value="1"/>
</dbReference>
<dbReference type="Gene3D" id="3.30.1330.200">
    <property type="match status" value="1"/>
</dbReference>
<dbReference type="HAMAP" id="MF_01440">
    <property type="entry name" value="CheD"/>
    <property type="match status" value="1"/>
</dbReference>
<dbReference type="InterPro" id="IPR038592">
    <property type="entry name" value="CheD-like_sf"/>
</dbReference>
<dbReference type="InterPro" id="IPR005659">
    <property type="entry name" value="Chemorcpt_Glu_NH3ase_CheD"/>
</dbReference>
<dbReference type="InterPro" id="IPR011324">
    <property type="entry name" value="Cytotoxic_necrot_fac-like_cat"/>
</dbReference>
<dbReference type="NCBIfam" id="NF010013">
    <property type="entry name" value="PRK13487.1"/>
    <property type="match status" value="1"/>
</dbReference>
<dbReference type="NCBIfam" id="NF010014">
    <property type="entry name" value="PRK13489.1"/>
    <property type="match status" value="1"/>
</dbReference>
<dbReference type="PANTHER" id="PTHR35147">
    <property type="entry name" value="CHEMORECEPTOR GLUTAMINE DEAMIDASE CHED-RELATED"/>
    <property type="match status" value="1"/>
</dbReference>
<dbReference type="PANTHER" id="PTHR35147:SF2">
    <property type="entry name" value="CHEMORECEPTOR GLUTAMINE DEAMIDASE CHED-RELATED"/>
    <property type="match status" value="1"/>
</dbReference>
<dbReference type="Pfam" id="PF03975">
    <property type="entry name" value="CheD"/>
    <property type="match status" value="1"/>
</dbReference>
<dbReference type="SUPFAM" id="SSF64438">
    <property type="entry name" value="CNF1/YfiH-like putative cysteine hydrolases"/>
    <property type="match status" value="1"/>
</dbReference>
<name>CHED_PARXL</name>
<reference key="1">
    <citation type="journal article" date="2006" name="Proc. Natl. Acad. Sci. U.S.A.">
        <title>Burkholderia xenovorans LB400 harbors a multi-replicon, 9.73-Mbp genome shaped for versatility.</title>
        <authorList>
            <person name="Chain P.S.G."/>
            <person name="Denef V.J."/>
            <person name="Konstantinidis K.T."/>
            <person name="Vergez L.M."/>
            <person name="Agullo L."/>
            <person name="Reyes V.L."/>
            <person name="Hauser L."/>
            <person name="Cordova M."/>
            <person name="Gomez L."/>
            <person name="Gonzalez M."/>
            <person name="Land M."/>
            <person name="Lao V."/>
            <person name="Larimer F."/>
            <person name="LiPuma J.J."/>
            <person name="Mahenthiralingam E."/>
            <person name="Malfatti S.A."/>
            <person name="Marx C.J."/>
            <person name="Parnell J.J."/>
            <person name="Ramette A."/>
            <person name="Richardson P."/>
            <person name="Seeger M."/>
            <person name="Smith D."/>
            <person name="Spilker T."/>
            <person name="Sul W.J."/>
            <person name="Tsoi T.V."/>
            <person name="Ulrich L.E."/>
            <person name="Zhulin I.B."/>
            <person name="Tiedje J.M."/>
        </authorList>
    </citation>
    <scope>NUCLEOTIDE SEQUENCE [LARGE SCALE GENOMIC DNA]</scope>
    <source>
        <strain>LB400</strain>
    </source>
</reference>
<feature type="chain" id="PRO_0000251019" description="Probable chemoreceptor glutamine deamidase CheD">
    <location>
        <begin position="1"/>
        <end position="250"/>
    </location>
</feature>
<proteinExistence type="inferred from homology"/>
<comment type="function">
    <text evidence="1">Probably deamidates glutamine residues to glutamate on methyl-accepting chemotaxis receptors (MCPs), playing an important role in chemotaxis.</text>
</comment>
<comment type="catalytic activity">
    <reaction evidence="1">
        <text>L-glutaminyl-[protein] + H2O = L-glutamyl-[protein] + NH4(+)</text>
        <dbReference type="Rhea" id="RHEA:16441"/>
        <dbReference type="Rhea" id="RHEA-COMP:10207"/>
        <dbReference type="Rhea" id="RHEA-COMP:10208"/>
        <dbReference type="ChEBI" id="CHEBI:15377"/>
        <dbReference type="ChEBI" id="CHEBI:28938"/>
        <dbReference type="ChEBI" id="CHEBI:29973"/>
        <dbReference type="ChEBI" id="CHEBI:30011"/>
        <dbReference type="EC" id="3.5.1.44"/>
    </reaction>
</comment>
<comment type="similarity">
    <text evidence="1">Belongs to the CheD family.</text>
</comment>
<sequence>MSSALPIATNLYYDNHFQRPGVKLLPNEFYTTSEDMVLVTVLGSCVAACIQDRTAGIGGMNHFMLPDDGADVGQAASDSMRYGAYAMEVLINELIKAGGRRERFEAKVFGGGAVLAGMTTMNIGDRNSEFVRRYLALEKIRIVAEDLQGSHPRKVAFMPRTGQVMVKKLRLQQEAGVAEREQALMRQNAQARAERLAAARKRVELFSSPAASKARVELFSTPAAARPKVELFGAGSRPINSNNARTTEEA</sequence>
<accession>Q13SY1</accession>
<protein>
    <recommendedName>
        <fullName evidence="1">Probable chemoreceptor glutamine deamidase CheD</fullName>
        <ecNumber evidence="1">3.5.1.44</ecNumber>
    </recommendedName>
</protein>